<protein>
    <recommendedName>
        <fullName evidence="17">Non-specific lipid-transfer protein Cor a 8.0101</fullName>
        <shortName evidence="15">nsLTP Cor a 8</shortName>
    </recommendedName>
    <alternativeName>
        <fullName evidence="12 13 14 15 16">Allergen Cor a 8</fullName>
    </alternativeName>
    <alternativeName>
        <fullName evidence="12 13 14">Lipid transfer protein Cor a 8</fullName>
        <shortName evidence="12 13 14 16">LTP Cor a 8</shortName>
    </alternativeName>
    <allergenName evidence="17">Cor a 8.0101</allergenName>
</protein>
<feature type="signal peptide" evidence="3 4 10">
    <location>
        <begin position="1"/>
        <end position="23"/>
    </location>
</feature>
<feature type="chain" id="PRO_5004323179" description="Non-specific lipid-transfer protein Cor a 8.0101" evidence="1 18 19 20">
    <location>
        <begin position="24"/>
        <end position="115"/>
    </location>
</feature>
<feature type="disulfide bond" evidence="10 22">
    <location>
        <begin position="27"/>
        <end position="74"/>
    </location>
</feature>
<feature type="disulfide bond" evidence="10 22">
    <location>
        <begin position="37"/>
        <end position="51"/>
    </location>
</feature>
<feature type="disulfide bond" evidence="10 22">
    <location>
        <begin position="52"/>
        <end position="97"/>
    </location>
</feature>
<feature type="disulfide bond" evidence="10 22">
    <location>
        <begin position="72"/>
        <end position="111"/>
    </location>
</feature>
<feature type="sequence conflict" description="In Ref. 2; AA sequence." evidence="17" ref="2">
    <original>SL</original>
    <variation>AI</variation>
    <location>
        <begin position="24"/>
        <end position="25"/>
    </location>
</feature>
<feature type="helix" evidence="23">
    <location>
        <begin position="27"/>
        <end position="34"/>
    </location>
</feature>
<feature type="helix" evidence="23">
    <location>
        <begin position="35"/>
        <end position="37"/>
    </location>
</feature>
<feature type="helix" evidence="23">
    <location>
        <begin position="38"/>
        <end position="43"/>
    </location>
</feature>
<feature type="helix" evidence="23">
    <location>
        <begin position="49"/>
        <end position="61"/>
    </location>
</feature>
<feature type="helix" evidence="23">
    <location>
        <begin position="65"/>
        <end position="80"/>
    </location>
</feature>
<feature type="helix" evidence="23">
    <location>
        <begin position="87"/>
        <end position="96"/>
    </location>
</feature>
<feature type="helix" evidence="23">
    <location>
        <begin position="111"/>
        <end position="113"/>
    </location>
</feature>
<keyword id="KW-0002">3D-structure</keyword>
<keyword id="KW-0020">Allergen</keyword>
<keyword id="KW-0903">Direct protein sequencing</keyword>
<keyword id="KW-1015">Disulfide bond</keyword>
<keyword id="KW-0446">Lipid-binding</keyword>
<keyword id="KW-0732">Signal</keyword>
<keyword id="KW-0813">Transport</keyword>
<organism evidence="21">
    <name type="scientific">Corylus avellana</name>
    <name type="common">European hazel</name>
    <name type="synonym">Corylus maxima</name>
    <dbReference type="NCBI Taxonomy" id="13451"/>
    <lineage>
        <taxon>Eukaryota</taxon>
        <taxon>Viridiplantae</taxon>
        <taxon>Streptophyta</taxon>
        <taxon>Embryophyta</taxon>
        <taxon>Tracheophyta</taxon>
        <taxon>Spermatophyta</taxon>
        <taxon>Magnoliopsida</taxon>
        <taxon>eudicotyledons</taxon>
        <taxon>Gunneridae</taxon>
        <taxon>Pentapetalae</taxon>
        <taxon>rosids</taxon>
        <taxon>fabids</taxon>
        <taxon>Fagales</taxon>
        <taxon>Betulaceae</taxon>
        <taxon>Corylus</taxon>
    </lineage>
</organism>
<accession>Q9ATH2</accession>
<comment type="function">
    <text evidence="2">Plant non-specific lipid-transfer proteins transfer phospholipids as well as galactolipids across membranes. May play a role in wax or cutin deposition in the cell walls of expanding epidermal cells and certain secretory tissues.</text>
</comment>
<comment type="biophysicochemical properties">
    <phDependence>
        <text evidence="10">Stable at low pH. Refolds at pH 2.5 after thermal denaturation. Thermal denaturation is irreversible at pH 7.5.</text>
    </phDependence>
    <temperatureDependence>
        <text evidence="3 10">Resistant to heat (PubMed:11898007, PubMed:26417906). At room temperature no effect in protein secondary structure by varying pH (PubMed:26417906).</text>
    </temperatureDependence>
</comment>
<comment type="subunit">
    <text evidence="6">Monomer.</text>
</comment>
<comment type="tissue specificity">
    <text evidence="3 4 5 6 7 8 9 10 11">Expressed in seed (at protein level) (PubMed:11898007, PubMed:14713920, PubMed:18036652, PubMed:19006093, PubMed:21735061, PubMed:22616776, PubMed:24577577, PubMed:26417906). Expressed in seed (Ref.9).</text>
</comment>
<comment type="developmental stage">
    <text evidence="8 11">Expressed during seed maturation. Expressed at three fruit developmental stages, at early stage (approximately 45 days before harvest), at middle stage (approximately 30 days before harvest) and at the final harvest stage. Higher level of expression before the harvest, then decreasing as seeds get close to their ripeness point (Ref.9). Expressed in raw seeds (PubMed:22616776).</text>
</comment>
<comment type="mass spectrometry">
    <text>Nonreduced protein.</text>
</comment>
<comment type="allergen">
    <text evidence="3 4 5 6 8">Causes an allergic reaction in human. Binds to IgE of patients allergic to hazelnuts (PubMed:11898007, PubMed:14713920, PubMed:18036652, PubMed:19006093, PubMed:22616776). IgE-binding of the natural protein is strongly reduced by autoclaving at 121 degrees Celsius for 15 or 30 minutes or at 138 degrees Celsius for 15 or 30 minutes, but not by high pressure treatment alone (300 Mba, 400 Mba, 500 Mba and 600 Mba) (PubMed:22616776).</text>
</comment>
<comment type="biotechnology">
    <text evidence="7 9 11">In order to protect patients that are allergic to hazelnuts, it is extremely important to find ways to detect trace amounts of hazelnut in foods that should not contain it for the food labeling and safety purposes. This protein is used in the development of these methods (PubMed:21735061, PubMed:24577577). For the detection of hazelnut, a liquid chromatography tandem mass spectrometry (LC-MS/MS) method in selected reaction monitoring (SRM) mode is developed by using a selected marker peptide from this protein as standard (PubMed:21735061). It is found that LC-MS/MS performs well in detecting this peptide in prepared model chocolates spiked with hazelnut. The sensitivity level is approximately 1 mg/kg (PubMed:24577577). The transcription level of the gene encoding this protein is investigated by a relative quantitative Real-Time PCR (RT-PCR) technique in order to compare the transcript amounts between different cultivars, and in one of the cultivars also in relation to different years of harvest and ripening stages. Each hazelnut sample is classified by the Principal Components Analysis (PCA) to better interpret the results. The method may help in choosing hypoallergenic genotypes of hazelnut for both growers and consumers (Ref.9).</text>
</comment>
<comment type="similarity">
    <text evidence="1 2 17">Belongs to the plant LTP family.</text>
</comment>
<sequence>MGSLKLVCAVLLCMMVAAPVARASLTCPQIKGNLTPCVLYLKNGGVLPPSCCKGVRAVNDASRTTSDRQSACNCLKDTAKGIAGLNPNLAAGLPGKCGVNIPYKISPSTNCNNVK</sequence>
<proteinExistence type="evidence at protein level"/>
<reference evidence="21" key="1">
    <citation type="journal article" date="2004" name="J. Allergy Clin. Immunol.">
        <title>Recombinant lipid transfer protein Cor a 8 from hazelnut: a new tool for in vitro diagnosis of potentially severe hazelnut allergy.</title>
        <authorList>
            <person name="Schocker F."/>
            <person name="Luttkopf D."/>
            <person name="Scheurer S."/>
            <person name="Petersen A."/>
            <person name="Cistero-Bahima A."/>
            <person name="Enrique E."/>
            <person name="San Miguel-Moncin M."/>
            <person name="Akkerdaas J."/>
            <person name="van Ree R."/>
            <person name="Vieths S."/>
            <person name="Becker W.M."/>
        </authorList>
    </citation>
    <scope>NUCLEOTIDE SEQUENCE [MRNA]</scope>
    <scope>PROTEIN SEQUENCE OF 24-46</scope>
    <scope>TISSUE SPECIFICITY</scope>
    <scope>ALLERGEN</scope>
    <source>
        <strain evidence="21">cv. Piemonte</strain>
        <tissue evidence="12">Seed</tissue>
    </source>
</reference>
<reference key="2">
    <citation type="journal article" date="2002" name="J. Allergy Clin. Immunol.">
        <title>Identification of hazelnut major allergens in sensitive patients with positive double-blind, placebo-controlled food challenge results.</title>
        <authorList>
            <person name="Pastorello E.A."/>
            <person name="Vieths S."/>
            <person name="Pravettoni V."/>
            <person name="Farioli L."/>
            <person name="Trambaioli C."/>
            <person name="Fortunato D."/>
            <person name="Luettkopf D."/>
            <person name="Calamari M."/>
            <person name="Ansaloni R."/>
            <person name="Scibilia J."/>
            <person name="Ballmer-Weber B.K."/>
            <person name="Poulsen L.K."/>
            <person name="Wuetrich B."/>
            <person name="Hansen K.S."/>
            <person name="Robino A.M."/>
            <person name="Ortolani C."/>
            <person name="Conti A."/>
        </authorList>
    </citation>
    <scope>PROTEIN SEQUENCE OF 24-35</scope>
    <scope>BIOPHYSICOCHEMICAL PROPERTIES</scope>
    <scope>TISSUE SPECIFICITY</scope>
    <scope>ALLERGEN</scope>
</reference>
<reference evidence="22" key="3">
    <citation type="journal article" date="2015" name="J. Agric. Food Chem.">
        <title>Structural and Functional Characterization of the Hazelnut Allergen Cor a 8.</title>
        <authorList>
            <person name="Offermann L.R."/>
            <person name="Bublin M."/>
            <person name="Perdue M.L."/>
            <person name="Pfeifer S."/>
            <person name="Dubiela P."/>
            <person name="Borowski T."/>
            <person name="Chruszcz M."/>
            <person name="Hoffmann-Sommergruber K."/>
        </authorList>
    </citation>
    <scope>PROTEIN SEQUENCE OF 24-29</scope>
    <scope>X-RAY CRYSTALLOGRAPHY (1.10 ANGSTROMS) OF 24-115</scope>
    <scope>BIOPHYSICOCHEMICAL PROPERTIES</scope>
    <scope>TISSUE SPECIFICITY</scope>
    <scope>MASS SPECTROMETRY</scope>
    <scope>DISULFIDE BONDS</scope>
    <scope>CIRCULAR DICHROISM ANALYSIS</scope>
</reference>
<reference key="4">
    <citation type="journal article" date="2008" name="Mol. Nutr. Food Res.">
        <title>The purification and characterisation of allergenic hazelnut seed proteins.</title>
        <authorList>
            <person name="Rigby N.M."/>
            <person name="Marsh J."/>
            <person name="Sancho A.I."/>
            <person name="Wellner K."/>
            <person name="Akkerdaas J."/>
            <person name="van Ree R."/>
            <person name="Knulst A."/>
            <person name="Fernandez-Rivas M."/>
            <person name="Brettlova V."/>
            <person name="Schilte P.P."/>
            <person name="Summer C."/>
            <person name="Pumphrey R."/>
            <person name="Shewry P.R."/>
            <person name="Mills E.N."/>
        </authorList>
    </citation>
    <scope>PROTEIN SEQUENCE OF 43-53 AND 81-115</scope>
    <scope>IDENTIFICATION BY MASS SPECTROMETRY</scope>
    <scope>SUBUNIT</scope>
    <scope>TISSUE SPECIFICITY</scope>
    <scope>ALLERGEN</scope>
    <scope>CIRCULAR DICHROISM ANALYSIS</scope>
</reference>
<reference key="5">
    <citation type="journal article" date="2012" name="Anal. Bioanal. Chem.">
        <title>Marker peptide selection for the determination of hazelnut by LC-MS/MS and occurrence in other nuts.</title>
        <authorList>
            <person name="Ansari P."/>
            <person name="Stoppacher N."/>
            <person name="Baumgartner S."/>
        </authorList>
    </citation>
    <scope>PROTEIN SEQUENCE OF 81-96</scope>
    <scope>TISSUE SPECIFICITY</scope>
    <scope>IDENTIFICATION BY MASS SPECTROMETRY</scope>
    <scope>BIOTECHNOLOGY</scope>
</reference>
<reference key="6">
    <citation type="journal article" date="2014" name="Anal. Bioanal. Chem.">
        <title>Assessing hazelnut allergens by protein- and DNA-based approaches: LC-MS/MS, ELISA and real-time PCR.</title>
        <authorList>
            <person name="Costa J."/>
            <person name="Ansari P."/>
            <person name="Mafra I."/>
            <person name="Oliveira M.B."/>
            <person name="Baumgartner S."/>
        </authorList>
    </citation>
    <scope>PROTEIN SEQUENCE OF 81-96</scope>
    <scope>TISSUE SPECIFICITY</scope>
    <scope>IDENTIFICATION BY MASS SPECTROMETRY</scope>
    <scope>BIOTECHNOLOGY</scope>
</reference>
<reference key="7">
    <citation type="journal article" date="2008" name="J. Allergy Clin. Immunol.">
        <title>Lipid transfer protein-linked hazelnut allergy in children from a non-Mediterranean birch-endemic area.</title>
        <authorList>
            <person name="Flinterman A.E."/>
            <person name="Akkerdaas J.H."/>
            <person name="den Hartog Jager C.F."/>
            <person name="Rigby N.M."/>
            <person name="Fernandez-Rivas M."/>
            <person name="Hoekstra M.O."/>
            <person name="Bruijnzeel-Koomen C.A."/>
            <person name="Knulst A.C."/>
            <person name="van Ree R."/>
            <person name="Pasmans S.G."/>
        </authorList>
    </citation>
    <scope>TISSUE SPECIFICITY</scope>
    <scope>ALLERGEN</scope>
</reference>
<reference key="8">
    <citation type="journal article" date="2012" name="J. Clin. Bioinforma.">
        <title>Effects of autoclaving and high pressure on allergenicity of hazelnut proteins.</title>
        <authorList>
            <person name="Lopez E."/>
            <person name="Cuadrado C."/>
            <person name="Burbano C."/>
            <person name="Jimenez M.A."/>
            <person name="Rodriguez J."/>
            <person name="Crespo J.F."/>
        </authorList>
    </citation>
    <scope>TISSUE SPECIFICITY</scope>
    <scope>DEVELOPMENTAL STAGE</scope>
    <scope>ALLERGEN</scope>
    <scope>3D-STRUCTURE MODELING</scope>
</reference>
<reference key="9">
    <citation type="journal article" date="2013" name="Int. J. Food Sci. Technol.">
        <title>Gene transcription analysis of hazelnut (C orylus avellana L.) allergens Cor a 1, Cor a 8 and Cor a 11: a comparative study.</title>
        <authorList>
            <person name="Garino C."/>
            <person name="Locatelli M."/>
            <person name="Coisson J.D."/>
            <person name="D'Andrea M."/>
            <person name="Cereti E."/>
            <person name="Travaglia F."/>
            <person name="Arlorio M."/>
        </authorList>
    </citation>
    <scope>TISSUE SPECIFICITY</scope>
    <scope>DEVELOPMENTAL STAGE</scope>
    <scope>BIOTECHNOLOGY</scope>
</reference>
<dbReference type="EMBL" id="AF329829">
    <property type="protein sequence ID" value="AAK28533.1"/>
    <property type="molecule type" value="mRNA"/>
</dbReference>
<dbReference type="RefSeq" id="XP_059428235.1">
    <property type="nucleotide sequence ID" value="XM_059572252.1"/>
</dbReference>
<dbReference type="PDB" id="4XUW">
    <property type="method" value="X-ray"/>
    <property type="resolution" value="1.10 A"/>
    <property type="chains" value="A/B=24-115"/>
</dbReference>
<dbReference type="PDBsum" id="4XUW"/>
<dbReference type="SMR" id="Q9ATH2"/>
<dbReference type="Allergome" id="245">
    <property type="allergen name" value="Cor a 8"/>
</dbReference>
<dbReference type="Allergome" id="3219">
    <property type="allergen name" value="Cor a 8.0101"/>
</dbReference>
<dbReference type="GeneID" id="132162009"/>
<dbReference type="OrthoDB" id="1890443at2759"/>
<dbReference type="EvolutionaryTrace" id="Q9ATH2"/>
<dbReference type="GO" id="GO:0043245">
    <property type="term" value="C:extraorganismal space"/>
    <property type="evidence" value="ECO:0000314"/>
    <property type="project" value="UniProtKB"/>
</dbReference>
<dbReference type="GO" id="GO:0008289">
    <property type="term" value="F:lipid binding"/>
    <property type="evidence" value="ECO:0007669"/>
    <property type="project" value="UniProtKB-KW"/>
</dbReference>
<dbReference type="GO" id="GO:0045735">
    <property type="term" value="F:nutrient reservoir activity"/>
    <property type="evidence" value="ECO:0000314"/>
    <property type="project" value="UniProtKB"/>
</dbReference>
<dbReference type="GO" id="GO:0006869">
    <property type="term" value="P:lipid transport"/>
    <property type="evidence" value="ECO:0007669"/>
    <property type="project" value="InterPro"/>
</dbReference>
<dbReference type="GO" id="GO:0048316">
    <property type="term" value="P:seed development"/>
    <property type="evidence" value="ECO:0000270"/>
    <property type="project" value="UniProtKB"/>
</dbReference>
<dbReference type="CDD" id="cd01960">
    <property type="entry name" value="nsLTP1"/>
    <property type="match status" value="1"/>
</dbReference>
<dbReference type="FunFam" id="1.10.110.10:FF:000002">
    <property type="entry name" value="Non-specific lipid-transfer protein"/>
    <property type="match status" value="1"/>
</dbReference>
<dbReference type="Gene3D" id="1.10.110.10">
    <property type="entry name" value="Plant lipid-transfer and hydrophobic proteins"/>
    <property type="match status" value="1"/>
</dbReference>
<dbReference type="InterPro" id="IPR036312">
    <property type="entry name" value="Bifun_inhib/LTP/seed_sf"/>
</dbReference>
<dbReference type="InterPro" id="IPR016140">
    <property type="entry name" value="Bifunc_inhib/LTP/seed_store"/>
</dbReference>
<dbReference type="InterPro" id="IPR000528">
    <property type="entry name" value="Plant_nsLTP"/>
</dbReference>
<dbReference type="PANTHER" id="PTHR33076">
    <property type="entry name" value="NON-SPECIFIC LIPID-TRANSFER PROTEIN 2-RELATED"/>
    <property type="match status" value="1"/>
</dbReference>
<dbReference type="Pfam" id="PF00234">
    <property type="entry name" value="Tryp_alpha_amyl"/>
    <property type="match status" value="1"/>
</dbReference>
<dbReference type="PRINTS" id="PR00382">
    <property type="entry name" value="LIPIDTRNSFER"/>
</dbReference>
<dbReference type="SMART" id="SM00499">
    <property type="entry name" value="AAI"/>
    <property type="match status" value="1"/>
</dbReference>
<dbReference type="SUPFAM" id="SSF47699">
    <property type="entry name" value="Bifunctional inhibitor/lipid-transfer protein/seed storage 2S albumin"/>
    <property type="match status" value="1"/>
</dbReference>
<dbReference type="PROSITE" id="PS00597">
    <property type="entry name" value="PLANT_LTP"/>
    <property type="match status" value="1"/>
</dbReference>
<name>NLTP_CORAV</name>
<evidence type="ECO:0000255" key="1"/>
<evidence type="ECO:0000255" key="2">
    <source>
        <dbReference type="RuleBase" id="RU000628"/>
    </source>
</evidence>
<evidence type="ECO:0000269" key="3">
    <source>
    </source>
</evidence>
<evidence type="ECO:0000269" key="4">
    <source>
    </source>
</evidence>
<evidence type="ECO:0000269" key="5">
    <source>
    </source>
</evidence>
<evidence type="ECO:0000269" key="6">
    <source>
    </source>
</evidence>
<evidence type="ECO:0000269" key="7">
    <source>
    </source>
</evidence>
<evidence type="ECO:0000269" key="8">
    <source>
    </source>
</evidence>
<evidence type="ECO:0000269" key="9">
    <source>
    </source>
</evidence>
<evidence type="ECO:0000269" key="10">
    <source>
    </source>
</evidence>
<evidence type="ECO:0000269" key="11">
    <source ref="9"/>
</evidence>
<evidence type="ECO:0000303" key="12">
    <source>
    </source>
</evidence>
<evidence type="ECO:0000303" key="13">
    <source>
    </source>
</evidence>
<evidence type="ECO:0000303" key="14">
    <source>
    </source>
</evidence>
<evidence type="ECO:0000303" key="15">
    <source>
    </source>
</evidence>
<evidence type="ECO:0000303" key="16">
    <source ref="9"/>
</evidence>
<evidence type="ECO:0000305" key="17"/>
<evidence type="ECO:0000305" key="18">
    <source>
    </source>
</evidence>
<evidence type="ECO:0000305" key="19">
    <source>
    </source>
</evidence>
<evidence type="ECO:0000305" key="20">
    <source>
    </source>
</evidence>
<evidence type="ECO:0000312" key="21">
    <source>
        <dbReference type="EMBL" id="AAK28533.1"/>
    </source>
</evidence>
<evidence type="ECO:0007744" key="22">
    <source>
        <dbReference type="PDB" id="4XUW"/>
    </source>
</evidence>
<evidence type="ECO:0007829" key="23">
    <source>
        <dbReference type="PDB" id="4XUW"/>
    </source>
</evidence>